<name>SPE44_CAEEL</name>
<accession>Q18171</accession>
<keyword id="KW-0158">Chromosome</keyword>
<keyword id="KW-0238">DNA-binding</keyword>
<keyword id="KW-0479">Metal-binding</keyword>
<keyword id="KW-0539">Nucleus</keyword>
<keyword id="KW-1185">Reference proteome</keyword>
<keyword id="KW-0804">Transcription</keyword>
<keyword id="KW-0805">Transcription regulation</keyword>
<keyword id="KW-0862">Zinc</keyword>
<comment type="function">
    <text evidence="3">Transcription factor which controls spermatogenesis and sperm cell fate by regulation of sperm gene expression.</text>
</comment>
<comment type="interaction">
    <interactant intactId="EBI-320157">
        <id>Q18171</id>
    </interactant>
    <interactant intactId="EBI-318513">
        <id>Q9U9Y8</id>
        <label>lit-1</label>
    </interactant>
    <organismsDiffer>false</organismsDiffer>
    <experiments>3</experiments>
</comment>
<comment type="subcellular location">
    <subcellularLocation>
        <location evidence="3">Chromosome</location>
    </subcellularLocation>
    <subcellularLocation>
        <location evidence="1 3">Nucleus</location>
    </subcellularLocation>
    <text evidence="3">Localized along the length of most but not all of the autosomal pachytene chromosomes; not detected on X chromosome.</text>
</comment>
<comment type="developmental stage">
    <text evidence="3">Expressed in larval stage L3 male and hermaphrodite germlines, coinciding with sperm fate specification (at protein level) (PubMed:22570621). Expression persists throughout adulthood in males, but is absent in adult hermaphrodites that are undergoing oogenesis (at protein level) (PubMed:22570621).</text>
</comment>
<feature type="chain" id="PRO_0000452250" description="Transcription regulator spe-44">
    <location>
        <begin position="1"/>
        <end position="424"/>
    </location>
</feature>
<feature type="domain" description="SAND" evidence="1">
    <location>
        <begin position="65"/>
        <end position="150"/>
    </location>
</feature>
<feature type="region of interest" description="Disordered" evidence="2">
    <location>
        <begin position="178"/>
        <end position="228"/>
    </location>
</feature>
<feature type="region of interest" description="Disordered" evidence="2">
    <location>
        <begin position="371"/>
        <end position="394"/>
    </location>
</feature>
<feature type="compositionally biased region" description="Basic and acidic residues" evidence="2">
    <location>
        <begin position="192"/>
        <end position="210"/>
    </location>
</feature>
<feature type="compositionally biased region" description="Polar residues" evidence="2">
    <location>
        <begin position="378"/>
        <end position="388"/>
    </location>
</feature>
<evidence type="ECO:0000255" key="1">
    <source>
        <dbReference type="PROSITE-ProRule" id="PRU00185"/>
    </source>
</evidence>
<evidence type="ECO:0000256" key="2">
    <source>
        <dbReference type="SAM" id="MobiDB-lite"/>
    </source>
</evidence>
<evidence type="ECO:0000269" key="3">
    <source>
    </source>
</evidence>
<evidence type="ECO:0000303" key="4">
    <source>
    </source>
</evidence>
<evidence type="ECO:0000305" key="5"/>
<evidence type="ECO:0000312" key="6">
    <source>
        <dbReference type="Proteomes" id="UP000001940"/>
    </source>
</evidence>
<evidence type="ECO:0000312" key="7">
    <source>
        <dbReference type="WormBase" id="C25G4.4"/>
    </source>
</evidence>
<proteinExistence type="evidence at protein level"/>
<organism evidence="6">
    <name type="scientific">Caenorhabditis elegans</name>
    <dbReference type="NCBI Taxonomy" id="6239"/>
    <lineage>
        <taxon>Eukaryota</taxon>
        <taxon>Metazoa</taxon>
        <taxon>Ecdysozoa</taxon>
        <taxon>Nematoda</taxon>
        <taxon>Chromadorea</taxon>
        <taxon>Rhabditida</taxon>
        <taxon>Rhabditina</taxon>
        <taxon>Rhabditomorpha</taxon>
        <taxon>Rhabditoidea</taxon>
        <taxon>Rhabditidae</taxon>
        <taxon>Peloderinae</taxon>
        <taxon>Caenorhabditis</taxon>
    </lineage>
</organism>
<protein>
    <recommendedName>
        <fullName evidence="5">Transcription regulator spe-44</fullName>
    </recommendedName>
    <alternativeName>
        <fullName evidence="4 7">Spermatogenesis defective 44</fullName>
    </alternativeName>
</protein>
<sequence>MFGGDVSAASVLPSHPISGSCDGFQAEGSDHHHSTMTPFQESQRNVYQILYGHPANDDFPRPITPLQITIPEGDASPTVPVSCGVVNGKMHLNLFMCPGIHQPCIEVGNDLLSPKQFTIRGDKERQKDWKASIRVGRSSLRTHMEAMTIDFYEHMNRCSGKCQSRNYVNAPSEEVLQARKSKRTSEAGQLKYEIENEMAGKEADNDDNRKSAKKARGRPRGSVNKPRQMVKMEPQDDRFFEEFFIDAPPLQSMSSNEEPTSSNKESNECTPFNDILNCLQNDPMNFWSQMQQTGVIGHFCDDIIVSAINLKQSVMDNPVTPTTANMLTRTAFALGIPPVVVHRVQSIERNAYQQRKHDEMFNDIQSTLAEEHSVKYQPRTSSSSQESLHTAREFTEEKVEELIDVCKYDDYPESECLPGPSHIQ</sequence>
<gene>
    <name evidence="7" type="primary">spe-44</name>
    <name evidence="7" type="ORF">C25G4.4</name>
</gene>
<reference evidence="6" key="1">
    <citation type="journal article" date="1998" name="Science">
        <title>Genome sequence of the nematode C. elegans: a platform for investigating biology.</title>
        <authorList>
            <consortium name="The C. elegans sequencing consortium"/>
        </authorList>
    </citation>
    <scope>NUCLEOTIDE SEQUENCE [LARGE SCALE GENOMIC DNA]</scope>
    <source>
        <strain evidence="6">Bristol N2</strain>
    </source>
</reference>
<reference evidence="5" key="2">
    <citation type="journal article" date="2012" name="PLoS Genet.">
        <title>SPE-44 implements sperm cell fate.</title>
        <authorList>
            <person name="Kulkarni M."/>
            <person name="Shakes D.C."/>
            <person name="Guevel K."/>
            <person name="Smith H.E."/>
        </authorList>
    </citation>
    <scope>FUNCTION</scope>
    <scope>SUBCELLULAR LOCATION</scope>
    <scope>DEVELOPMENTAL STAGE</scope>
</reference>
<dbReference type="EMBL" id="BX284604">
    <property type="protein sequence ID" value="CAA94573.1"/>
    <property type="molecule type" value="Genomic_DNA"/>
</dbReference>
<dbReference type="PIR" id="T19470">
    <property type="entry name" value="T19470"/>
</dbReference>
<dbReference type="RefSeq" id="NP_502379.1">
    <property type="nucleotide sequence ID" value="NM_069978.6"/>
</dbReference>
<dbReference type="SMR" id="Q18171"/>
<dbReference type="DIP" id="DIP-27457N"/>
<dbReference type="FunCoup" id="Q18171">
    <property type="interactions" value="139"/>
</dbReference>
<dbReference type="IntAct" id="Q18171">
    <property type="interactions" value="40"/>
</dbReference>
<dbReference type="STRING" id="6239.C25G4.4.1"/>
<dbReference type="PaxDb" id="6239-C25G4.4"/>
<dbReference type="EnsemblMetazoa" id="C25G4.4.1">
    <property type="protein sequence ID" value="C25G4.4.1"/>
    <property type="gene ID" value="WBGene00007732"/>
</dbReference>
<dbReference type="GeneID" id="182915"/>
<dbReference type="KEGG" id="cel:CELE_C25G4.4"/>
<dbReference type="UCSC" id="C25G4.4">
    <property type="organism name" value="c. elegans"/>
</dbReference>
<dbReference type="AGR" id="WB:WBGene00007732"/>
<dbReference type="CTD" id="182915"/>
<dbReference type="WormBase" id="C25G4.4">
    <property type="protein sequence ID" value="CE05305"/>
    <property type="gene ID" value="WBGene00007732"/>
    <property type="gene designation" value="spe-44"/>
</dbReference>
<dbReference type="eggNOG" id="KOG4333">
    <property type="taxonomic scope" value="Eukaryota"/>
</dbReference>
<dbReference type="GeneTree" id="ENSGT00410000025596"/>
<dbReference type="HOGENOM" id="CLU_584263_0_0_1"/>
<dbReference type="InParanoid" id="Q18171"/>
<dbReference type="OMA" id="DWKASIR"/>
<dbReference type="OrthoDB" id="5792412at2759"/>
<dbReference type="PhylomeDB" id="Q18171"/>
<dbReference type="SignaLink" id="Q18171"/>
<dbReference type="PRO" id="PR:Q18171"/>
<dbReference type="Proteomes" id="UP000001940">
    <property type="component" value="Chromosome IV"/>
</dbReference>
<dbReference type="Bgee" id="WBGene00007732">
    <property type="expression patterns" value="Expressed in germ line (C elegans) and 5 other cell types or tissues"/>
</dbReference>
<dbReference type="GO" id="GO:0030849">
    <property type="term" value="C:autosome"/>
    <property type="evidence" value="ECO:0000314"/>
    <property type="project" value="WormBase"/>
</dbReference>
<dbReference type="GO" id="GO:0005634">
    <property type="term" value="C:nucleus"/>
    <property type="evidence" value="ECO:0007669"/>
    <property type="project" value="UniProtKB-SubCell"/>
</dbReference>
<dbReference type="GO" id="GO:0003677">
    <property type="term" value="F:DNA binding"/>
    <property type="evidence" value="ECO:0007669"/>
    <property type="project" value="UniProtKB-KW"/>
</dbReference>
<dbReference type="GO" id="GO:0001228">
    <property type="term" value="F:DNA-binding transcription activator activity, RNA polymerase II-specific"/>
    <property type="evidence" value="ECO:0000314"/>
    <property type="project" value="WormBase"/>
</dbReference>
<dbReference type="GO" id="GO:0046872">
    <property type="term" value="F:metal ion binding"/>
    <property type="evidence" value="ECO:0007669"/>
    <property type="project" value="UniProtKB-KW"/>
</dbReference>
<dbReference type="GO" id="GO:0045944">
    <property type="term" value="P:positive regulation of transcription by RNA polymerase II"/>
    <property type="evidence" value="ECO:0000314"/>
    <property type="project" value="WormBase"/>
</dbReference>
<dbReference type="GO" id="GO:0007283">
    <property type="term" value="P:spermatogenesis"/>
    <property type="evidence" value="ECO:0000315"/>
    <property type="project" value="WormBase"/>
</dbReference>
<dbReference type="Gene3D" id="3.10.390.10">
    <property type="entry name" value="SAND domain-like"/>
    <property type="match status" value="1"/>
</dbReference>
<dbReference type="InterPro" id="IPR010919">
    <property type="entry name" value="SAND-like_dom_sf"/>
</dbReference>
<dbReference type="InterPro" id="IPR000770">
    <property type="entry name" value="SAND_dom"/>
</dbReference>
<dbReference type="PANTHER" id="PTHR10417">
    <property type="entry name" value="GLUCOCORTICOID MODULATORY ELEMENT-BINDING PROTEIN"/>
    <property type="match status" value="1"/>
</dbReference>
<dbReference type="PANTHER" id="PTHR10417:SF4">
    <property type="entry name" value="SAND DOMAIN-CONTAINING PROTEIN-RELATED"/>
    <property type="match status" value="1"/>
</dbReference>
<dbReference type="Pfam" id="PF01342">
    <property type="entry name" value="SAND"/>
    <property type="match status" value="1"/>
</dbReference>
<dbReference type="SMART" id="SM00258">
    <property type="entry name" value="SAND"/>
    <property type="match status" value="1"/>
</dbReference>
<dbReference type="SUPFAM" id="SSF63763">
    <property type="entry name" value="SAND domain-like"/>
    <property type="match status" value="1"/>
</dbReference>
<dbReference type="PROSITE" id="PS50864">
    <property type="entry name" value="SAND"/>
    <property type="match status" value="1"/>
</dbReference>